<accession>B2AH89</accession>
<organism>
    <name type="scientific">Cupriavidus taiwanensis (strain DSM 17343 / BCRC 17206 / CCUG 44338 / CIP 107171 / LMG 19424 / R1)</name>
    <name type="common">Ralstonia taiwanensis (strain LMG 19424)</name>
    <dbReference type="NCBI Taxonomy" id="977880"/>
    <lineage>
        <taxon>Bacteria</taxon>
        <taxon>Pseudomonadati</taxon>
        <taxon>Pseudomonadota</taxon>
        <taxon>Betaproteobacteria</taxon>
        <taxon>Burkholderiales</taxon>
        <taxon>Burkholderiaceae</taxon>
        <taxon>Cupriavidus</taxon>
    </lineage>
</organism>
<comment type="function">
    <text evidence="1">Specifically dimethylates two adjacent adenosines (A1518 and A1519) in the loop of a conserved hairpin near the 3'-end of 16S rRNA in the 30S particle. May play a critical role in biogenesis of 30S subunits.</text>
</comment>
<comment type="catalytic activity">
    <reaction evidence="1">
        <text>adenosine(1518)/adenosine(1519) in 16S rRNA + 4 S-adenosyl-L-methionine = N(6)-dimethyladenosine(1518)/N(6)-dimethyladenosine(1519) in 16S rRNA + 4 S-adenosyl-L-homocysteine + 4 H(+)</text>
        <dbReference type="Rhea" id="RHEA:19609"/>
        <dbReference type="Rhea" id="RHEA-COMP:10232"/>
        <dbReference type="Rhea" id="RHEA-COMP:10233"/>
        <dbReference type="ChEBI" id="CHEBI:15378"/>
        <dbReference type="ChEBI" id="CHEBI:57856"/>
        <dbReference type="ChEBI" id="CHEBI:59789"/>
        <dbReference type="ChEBI" id="CHEBI:74411"/>
        <dbReference type="ChEBI" id="CHEBI:74493"/>
        <dbReference type="EC" id="2.1.1.182"/>
    </reaction>
</comment>
<comment type="subcellular location">
    <subcellularLocation>
        <location evidence="1">Cytoplasm</location>
    </subcellularLocation>
</comment>
<comment type="similarity">
    <text evidence="1">Belongs to the class I-like SAM-binding methyltransferase superfamily. rRNA adenine N(6)-methyltransferase family. RsmA subfamily.</text>
</comment>
<dbReference type="EC" id="2.1.1.182" evidence="1"/>
<dbReference type="EMBL" id="CU633749">
    <property type="protein sequence ID" value="CAP63138.1"/>
    <property type="molecule type" value="Genomic_DNA"/>
</dbReference>
<dbReference type="RefSeq" id="WP_012351798.1">
    <property type="nucleotide sequence ID" value="NC_010528.1"/>
</dbReference>
<dbReference type="SMR" id="B2AH89"/>
<dbReference type="GeneID" id="29760344"/>
<dbReference type="KEGG" id="cti:RALTA_A0470"/>
<dbReference type="eggNOG" id="COG0030">
    <property type="taxonomic scope" value="Bacteria"/>
</dbReference>
<dbReference type="HOGENOM" id="CLU_041220_0_1_4"/>
<dbReference type="BioCyc" id="CTAI977880:RALTA_RS02300-MONOMER"/>
<dbReference type="Proteomes" id="UP000001692">
    <property type="component" value="Chromosome 1"/>
</dbReference>
<dbReference type="GO" id="GO:0005829">
    <property type="term" value="C:cytosol"/>
    <property type="evidence" value="ECO:0007669"/>
    <property type="project" value="TreeGrafter"/>
</dbReference>
<dbReference type="GO" id="GO:0052908">
    <property type="term" value="F:16S rRNA (adenine(1518)-N(6)/adenine(1519)-N(6))-dimethyltransferase activity"/>
    <property type="evidence" value="ECO:0007669"/>
    <property type="project" value="UniProtKB-EC"/>
</dbReference>
<dbReference type="GO" id="GO:0003723">
    <property type="term" value="F:RNA binding"/>
    <property type="evidence" value="ECO:0007669"/>
    <property type="project" value="UniProtKB-KW"/>
</dbReference>
<dbReference type="FunFam" id="1.10.8.100:FF:000001">
    <property type="entry name" value="Ribosomal RNA small subunit methyltransferase A"/>
    <property type="match status" value="1"/>
</dbReference>
<dbReference type="Gene3D" id="1.10.8.100">
    <property type="entry name" value="Ribosomal RNA adenine dimethylase-like, domain 2"/>
    <property type="match status" value="1"/>
</dbReference>
<dbReference type="Gene3D" id="3.40.50.150">
    <property type="entry name" value="Vaccinia Virus protein VP39"/>
    <property type="match status" value="1"/>
</dbReference>
<dbReference type="HAMAP" id="MF_00607">
    <property type="entry name" value="16SrRNA_methyltr_A"/>
    <property type="match status" value="1"/>
</dbReference>
<dbReference type="InterPro" id="IPR001737">
    <property type="entry name" value="KsgA/Erm"/>
</dbReference>
<dbReference type="InterPro" id="IPR023165">
    <property type="entry name" value="rRNA_Ade_diMease-like_C"/>
</dbReference>
<dbReference type="InterPro" id="IPR020596">
    <property type="entry name" value="rRNA_Ade_Mease_Trfase_CS"/>
</dbReference>
<dbReference type="InterPro" id="IPR020598">
    <property type="entry name" value="rRNA_Ade_methylase_Trfase_N"/>
</dbReference>
<dbReference type="InterPro" id="IPR011530">
    <property type="entry name" value="rRNA_adenine_dimethylase"/>
</dbReference>
<dbReference type="InterPro" id="IPR029063">
    <property type="entry name" value="SAM-dependent_MTases_sf"/>
</dbReference>
<dbReference type="NCBIfam" id="TIGR00755">
    <property type="entry name" value="ksgA"/>
    <property type="match status" value="1"/>
</dbReference>
<dbReference type="PANTHER" id="PTHR11727">
    <property type="entry name" value="DIMETHYLADENOSINE TRANSFERASE"/>
    <property type="match status" value="1"/>
</dbReference>
<dbReference type="PANTHER" id="PTHR11727:SF7">
    <property type="entry name" value="DIMETHYLADENOSINE TRANSFERASE-RELATED"/>
    <property type="match status" value="1"/>
</dbReference>
<dbReference type="Pfam" id="PF00398">
    <property type="entry name" value="RrnaAD"/>
    <property type="match status" value="1"/>
</dbReference>
<dbReference type="SMART" id="SM00650">
    <property type="entry name" value="rADc"/>
    <property type="match status" value="1"/>
</dbReference>
<dbReference type="SUPFAM" id="SSF53335">
    <property type="entry name" value="S-adenosyl-L-methionine-dependent methyltransferases"/>
    <property type="match status" value="1"/>
</dbReference>
<dbReference type="PROSITE" id="PS01131">
    <property type="entry name" value="RRNA_A_DIMETH"/>
    <property type="match status" value="1"/>
</dbReference>
<dbReference type="PROSITE" id="PS51689">
    <property type="entry name" value="SAM_RNA_A_N6_MT"/>
    <property type="match status" value="1"/>
</dbReference>
<sequence length="277" mass="31091">MRSNVHQGHVARKRFGQNFLVDDTIIHGIVNAISPQAGDVLVEIGPGLGALTDPLLERIPQMQVVELDRDLVERLRRRYGERLQVHAGDALDFDFDKLAVPGRPLRIVGNLPYNISSPLLFHLMEFADHVHDQHFMLQKEVVERMVAEPGSKAFGRLSIMLQVRYYMEHVLDVPPGAFNPPPKVDSAVVRMIPWPRHGDGRLRSPHADCDITVLGDVVTAAFSQRRKVLRNTLSFLRDQVDFDAMGFDLGRRAEEVPVGEYVELARRLGDKASGQAA</sequence>
<gene>
    <name evidence="1" type="primary">rsmA</name>
    <name evidence="1" type="synonym">ksgA</name>
    <name type="ordered locus">RALTA_A0470</name>
</gene>
<proteinExistence type="inferred from homology"/>
<protein>
    <recommendedName>
        <fullName evidence="1">Ribosomal RNA small subunit methyltransferase A</fullName>
        <ecNumber evidence="1">2.1.1.182</ecNumber>
    </recommendedName>
    <alternativeName>
        <fullName evidence="1">16S rRNA (adenine(1518)-N(6)/adenine(1519)-N(6))-dimethyltransferase</fullName>
    </alternativeName>
    <alternativeName>
        <fullName evidence="1">16S rRNA dimethyladenosine transferase</fullName>
    </alternativeName>
    <alternativeName>
        <fullName evidence="1">16S rRNA dimethylase</fullName>
    </alternativeName>
    <alternativeName>
        <fullName evidence="1">S-adenosylmethionine-6-N', N'-adenosyl(rRNA) dimethyltransferase</fullName>
    </alternativeName>
</protein>
<name>RSMA_CUPTR</name>
<feature type="chain" id="PRO_1000130265" description="Ribosomal RNA small subunit methyltransferase A">
    <location>
        <begin position="1"/>
        <end position="277"/>
    </location>
</feature>
<feature type="binding site" evidence="1">
    <location>
        <position position="18"/>
    </location>
    <ligand>
        <name>S-adenosyl-L-methionine</name>
        <dbReference type="ChEBI" id="CHEBI:59789"/>
    </ligand>
</feature>
<feature type="binding site" evidence="1">
    <location>
        <position position="20"/>
    </location>
    <ligand>
        <name>S-adenosyl-L-methionine</name>
        <dbReference type="ChEBI" id="CHEBI:59789"/>
    </ligand>
</feature>
<feature type="binding site" evidence="1">
    <location>
        <position position="45"/>
    </location>
    <ligand>
        <name>S-adenosyl-L-methionine</name>
        <dbReference type="ChEBI" id="CHEBI:59789"/>
    </ligand>
</feature>
<feature type="binding site" evidence="1">
    <location>
        <position position="66"/>
    </location>
    <ligand>
        <name>S-adenosyl-L-methionine</name>
        <dbReference type="ChEBI" id="CHEBI:59789"/>
    </ligand>
</feature>
<feature type="binding site" evidence="1">
    <location>
        <position position="89"/>
    </location>
    <ligand>
        <name>S-adenosyl-L-methionine</name>
        <dbReference type="ChEBI" id="CHEBI:59789"/>
    </ligand>
</feature>
<feature type="binding site" evidence="1">
    <location>
        <position position="110"/>
    </location>
    <ligand>
        <name>S-adenosyl-L-methionine</name>
        <dbReference type="ChEBI" id="CHEBI:59789"/>
    </ligand>
</feature>
<evidence type="ECO:0000255" key="1">
    <source>
        <dbReference type="HAMAP-Rule" id="MF_00607"/>
    </source>
</evidence>
<reference key="1">
    <citation type="journal article" date="2008" name="Genome Res.">
        <title>Genome sequence of the beta-rhizobium Cupriavidus taiwanensis and comparative genomics of rhizobia.</title>
        <authorList>
            <person name="Amadou C."/>
            <person name="Pascal G."/>
            <person name="Mangenot S."/>
            <person name="Glew M."/>
            <person name="Bontemps C."/>
            <person name="Capela D."/>
            <person name="Carrere S."/>
            <person name="Cruveiller S."/>
            <person name="Dossat C."/>
            <person name="Lajus A."/>
            <person name="Marchetti M."/>
            <person name="Poinsot V."/>
            <person name="Rouy Z."/>
            <person name="Servin B."/>
            <person name="Saad M."/>
            <person name="Schenowitz C."/>
            <person name="Barbe V."/>
            <person name="Batut J."/>
            <person name="Medigue C."/>
            <person name="Masson-Boivin C."/>
        </authorList>
    </citation>
    <scope>NUCLEOTIDE SEQUENCE [LARGE SCALE GENOMIC DNA]</scope>
    <source>
        <strain>DSM 17343 / BCRC 17206 / CCUG 44338 / CIP 107171 / LMG 19424 / R1</strain>
    </source>
</reference>
<keyword id="KW-0963">Cytoplasm</keyword>
<keyword id="KW-0489">Methyltransferase</keyword>
<keyword id="KW-0694">RNA-binding</keyword>
<keyword id="KW-0698">rRNA processing</keyword>
<keyword id="KW-0949">S-adenosyl-L-methionine</keyword>
<keyword id="KW-0808">Transferase</keyword>